<evidence type="ECO:0000255" key="1">
    <source>
        <dbReference type="HAMAP-Rule" id="MF_01212"/>
    </source>
</evidence>
<evidence type="ECO:0000255" key="2">
    <source>
        <dbReference type="PROSITE-ProRule" id="PRU01175"/>
    </source>
</evidence>
<evidence type="ECO:0000256" key="3">
    <source>
        <dbReference type="SAM" id="MobiDB-lite"/>
    </source>
</evidence>
<organism>
    <name type="scientific">Shewanella baltica (strain OS195)</name>
    <dbReference type="NCBI Taxonomy" id="399599"/>
    <lineage>
        <taxon>Bacteria</taxon>
        <taxon>Pseudomonadati</taxon>
        <taxon>Pseudomonadota</taxon>
        <taxon>Gammaproteobacteria</taxon>
        <taxon>Alteromonadales</taxon>
        <taxon>Shewanellaceae</taxon>
        <taxon>Shewanella</taxon>
    </lineage>
</organism>
<dbReference type="EMBL" id="CP000891">
    <property type="protein sequence ID" value="ABX49353.1"/>
    <property type="molecule type" value="Genomic_DNA"/>
</dbReference>
<dbReference type="RefSeq" id="WP_012197104.1">
    <property type="nucleotide sequence ID" value="NC_009997.1"/>
</dbReference>
<dbReference type="SMR" id="A9L1A8"/>
<dbReference type="KEGG" id="sbn:Sbal195_2184"/>
<dbReference type="HOGENOM" id="CLU_028163_0_0_6"/>
<dbReference type="Proteomes" id="UP000000770">
    <property type="component" value="Chromosome"/>
</dbReference>
<dbReference type="GO" id="GO:0008832">
    <property type="term" value="F:dGTPase activity"/>
    <property type="evidence" value="ECO:0007669"/>
    <property type="project" value="TreeGrafter"/>
</dbReference>
<dbReference type="GO" id="GO:0006203">
    <property type="term" value="P:dGTP catabolic process"/>
    <property type="evidence" value="ECO:0007669"/>
    <property type="project" value="TreeGrafter"/>
</dbReference>
<dbReference type="CDD" id="cd00077">
    <property type="entry name" value="HDc"/>
    <property type="match status" value="1"/>
</dbReference>
<dbReference type="FunFam" id="1.10.3210.10:FF:000040">
    <property type="entry name" value="Deoxyguanosinetriphosphate triphosphohydrolase-like protein"/>
    <property type="match status" value="1"/>
</dbReference>
<dbReference type="Gene3D" id="1.10.3210.10">
    <property type="entry name" value="Hypothetical protein af1432"/>
    <property type="match status" value="2"/>
</dbReference>
<dbReference type="HAMAP" id="MF_01212">
    <property type="entry name" value="dGTPase_type2"/>
    <property type="match status" value="1"/>
</dbReference>
<dbReference type="InterPro" id="IPR006261">
    <property type="entry name" value="dGTPase"/>
</dbReference>
<dbReference type="InterPro" id="IPR050135">
    <property type="entry name" value="dGTPase-like"/>
</dbReference>
<dbReference type="InterPro" id="IPR023023">
    <property type="entry name" value="dNTPase_2"/>
</dbReference>
<dbReference type="InterPro" id="IPR003607">
    <property type="entry name" value="HD/PDEase_dom"/>
</dbReference>
<dbReference type="InterPro" id="IPR006674">
    <property type="entry name" value="HD_domain"/>
</dbReference>
<dbReference type="InterPro" id="IPR026875">
    <property type="entry name" value="PHydrolase_assoc_dom"/>
</dbReference>
<dbReference type="NCBIfam" id="NF041026">
    <property type="entry name" value="antiphage_dGTPase"/>
    <property type="match status" value="1"/>
</dbReference>
<dbReference type="NCBIfam" id="TIGR01353">
    <property type="entry name" value="dGTP_triPase"/>
    <property type="match status" value="1"/>
</dbReference>
<dbReference type="NCBIfam" id="NF003701">
    <property type="entry name" value="PRK05318.1"/>
    <property type="match status" value="1"/>
</dbReference>
<dbReference type="PANTHER" id="PTHR11373:SF40">
    <property type="entry name" value="DEOXYGUANOSINETRIPHOSPHATE TRIPHOSPHOHYDROLASE-LIKE PROTEIN 2"/>
    <property type="match status" value="1"/>
</dbReference>
<dbReference type="PANTHER" id="PTHR11373">
    <property type="entry name" value="DEOXYNUCLEOSIDE TRIPHOSPHATE TRIPHOSPHOHYDROLASE"/>
    <property type="match status" value="1"/>
</dbReference>
<dbReference type="Pfam" id="PF01966">
    <property type="entry name" value="HD"/>
    <property type="match status" value="1"/>
</dbReference>
<dbReference type="Pfam" id="PF13286">
    <property type="entry name" value="HD_assoc"/>
    <property type="match status" value="1"/>
</dbReference>
<dbReference type="SMART" id="SM00471">
    <property type="entry name" value="HDc"/>
    <property type="match status" value="1"/>
</dbReference>
<dbReference type="SUPFAM" id="SSF109604">
    <property type="entry name" value="HD-domain/PDEase-like"/>
    <property type="match status" value="1"/>
</dbReference>
<dbReference type="PROSITE" id="PS51831">
    <property type="entry name" value="HD"/>
    <property type="match status" value="1"/>
</dbReference>
<name>DGTL1_SHEB9</name>
<accession>A9L1A8</accession>
<reference key="1">
    <citation type="submission" date="2007-11" db="EMBL/GenBank/DDBJ databases">
        <title>Complete sequence of chromosome of Shewanella baltica OS195.</title>
        <authorList>
            <consortium name="US DOE Joint Genome Institute"/>
            <person name="Copeland A."/>
            <person name="Lucas S."/>
            <person name="Lapidus A."/>
            <person name="Barry K."/>
            <person name="Glavina del Rio T."/>
            <person name="Dalin E."/>
            <person name="Tice H."/>
            <person name="Pitluck S."/>
            <person name="Chain P."/>
            <person name="Malfatti S."/>
            <person name="Shin M."/>
            <person name="Vergez L."/>
            <person name="Schmutz J."/>
            <person name="Larimer F."/>
            <person name="Land M."/>
            <person name="Hauser L."/>
            <person name="Kyrpides N."/>
            <person name="Kim E."/>
            <person name="Brettar I."/>
            <person name="Rodrigues J."/>
            <person name="Konstantinidis K."/>
            <person name="Klappenbach J."/>
            <person name="Hofle M."/>
            <person name="Tiedje J."/>
            <person name="Richardson P."/>
        </authorList>
    </citation>
    <scope>NUCLEOTIDE SEQUENCE [LARGE SCALE GENOMIC DNA]</scope>
    <source>
        <strain>OS195</strain>
    </source>
</reference>
<protein>
    <recommendedName>
        <fullName evidence="1">Deoxyguanosinetriphosphate triphosphohydrolase-like protein</fullName>
    </recommendedName>
</protein>
<feature type="chain" id="PRO_1000138927" description="Deoxyguanosinetriphosphate triphosphohydrolase-like protein">
    <location>
        <begin position="1"/>
        <end position="449"/>
    </location>
</feature>
<feature type="domain" description="HD" evidence="2">
    <location>
        <begin position="59"/>
        <end position="255"/>
    </location>
</feature>
<feature type="region of interest" description="Disordered" evidence="3">
    <location>
        <begin position="1"/>
        <end position="27"/>
    </location>
</feature>
<feature type="compositionally biased region" description="Basic and acidic residues" evidence="3">
    <location>
        <begin position="7"/>
        <end position="27"/>
    </location>
</feature>
<keyword id="KW-0378">Hydrolase</keyword>
<proteinExistence type="inferred from homology"/>
<comment type="similarity">
    <text evidence="1">Belongs to the dGTPase family. Type 2 subfamily.</text>
</comment>
<sequence>MTSSVWQERRHGEDKQRRNDHRSPYQRDRARILHSAAFRRLQAKTQVLGVGMNDFYRTRLTHSLEVSQIGTGIAAQLRRKYPQHKQLLCSMSLLESLCLAHDIGHPPFGHGGEVALNYMMRDHGGFEGNGQTFRILSKLEPYTLDFGMNLCRRTMLGILKYPAPHSKLFVAGEHNEITNHRQLKPSQWPPVKGIFDDDNDIFAWVLEPLSEADRSRFTSPQQGSHPALHHYPHLRTQFKSFDCSIMELADDIAYAVHDLEDAIVMGIVTASQWHQDVAPTLTNSGDTWIRQELADIGNKLFSHEHHLRKDAIGTLVNGFVTAIVISEDDVFEEPLLRFNATLEPEFAIALNVLKQLVYKYVIRKPEIQMLEYKGQQIVMGLFEAFASDPERLLPLNTQERWRESEQQGLNSHRVLADYISGMTDEFAGRLYQQLFSPKAGSNVELSKEM</sequence>
<gene>
    <name type="ordered locus">Sbal195_2184</name>
</gene>